<sequence>MNEVVIPSVLLDVPVSAAPVHKQNLLDLDREGLEHFFADTLGEARYRAHQVMKWIHHRYVTDFDQMTDLGKALRAKLHQHAEVLVPNVVFDKPSTDGTHKWLLAMGTDGKNAIETVYIPDKGRGTLCVSSQVGCGLNCTFCSTATQGFNRNLTTAEIIGQVWVAARHLGNVPHQQRRLTNVVMMGMGEPLMNFDNVVRAMSVMRDDLGYGLASKRVTLSTSGLVPMIDRLATESDVSLAVSLHAANDVLRESLVPLNKKYPIAELMESCARYLRGNKKRDSVTFEYTLMKGINDQPEHARQLARLMRQFDNAVQSKDAGKVNLIPFNPFPGTRYERSGETEIRAFQKILLDAQVLTMVRRTRGDDIDAACGQLKGQVMDRTRRQAEFRRTLEGQADRDAAA</sequence>
<proteinExistence type="inferred from homology"/>
<comment type="function">
    <text evidence="1">Specifically methylates position 2 of adenine 2503 in 23S rRNA and position 2 of adenine 37 in tRNAs. m2A2503 modification seems to play a crucial role in the proofreading step occurring at the peptidyl transferase center and thus would serve to optimize ribosomal fidelity.</text>
</comment>
<comment type="catalytic activity">
    <reaction evidence="1">
        <text>adenosine(2503) in 23S rRNA + 2 reduced [2Fe-2S]-[ferredoxin] + 2 S-adenosyl-L-methionine = 2-methyladenosine(2503) in 23S rRNA + 5'-deoxyadenosine + L-methionine + 2 oxidized [2Fe-2S]-[ferredoxin] + S-adenosyl-L-homocysteine</text>
        <dbReference type="Rhea" id="RHEA:42916"/>
        <dbReference type="Rhea" id="RHEA-COMP:10000"/>
        <dbReference type="Rhea" id="RHEA-COMP:10001"/>
        <dbReference type="Rhea" id="RHEA-COMP:10152"/>
        <dbReference type="Rhea" id="RHEA-COMP:10282"/>
        <dbReference type="ChEBI" id="CHEBI:17319"/>
        <dbReference type="ChEBI" id="CHEBI:33737"/>
        <dbReference type="ChEBI" id="CHEBI:33738"/>
        <dbReference type="ChEBI" id="CHEBI:57844"/>
        <dbReference type="ChEBI" id="CHEBI:57856"/>
        <dbReference type="ChEBI" id="CHEBI:59789"/>
        <dbReference type="ChEBI" id="CHEBI:74411"/>
        <dbReference type="ChEBI" id="CHEBI:74497"/>
        <dbReference type="EC" id="2.1.1.192"/>
    </reaction>
</comment>
<comment type="catalytic activity">
    <reaction evidence="1">
        <text>adenosine(37) in tRNA + 2 reduced [2Fe-2S]-[ferredoxin] + 2 S-adenosyl-L-methionine = 2-methyladenosine(37) in tRNA + 5'-deoxyadenosine + L-methionine + 2 oxidized [2Fe-2S]-[ferredoxin] + S-adenosyl-L-homocysteine</text>
        <dbReference type="Rhea" id="RHEA:43332"/>
        <dbReference type="Rhea" id="RHEA-COMP:10000"/>
        <dbReference type="Rhea" id="RHEA-COMP:10001"/>
        <dbReference type="Rhea" id="RHEA-COMP:10162"/>
        <dbReference type="Rhea" id="RHEA-COMP:10485"/>
        <dbReference type="ChEBI" id="CHEBI:17319"/>
        <dbReference type="ChEBI" id="CHEBI:33737"/>
        <dbReference type="ChEBI" id="CHEBI:33738"/>
        <dbReference type="ChEBI" id="CHEBI:57844"/>
        <dbReference type="ChEBI" id="CHEBI:57856"/>
        <dbReference type="ChEBI" id="CHEBI:59789"/>
        <dbReference type="ChEBI" id="CHEBI:74411"/>
        <dbReference type="ChEBI" id="CHEBI:74497"/>
        <dbReference type="EC" id="2.1.1.192"/>
    </reaction>
</comment>
<comment type="cofactor">
    <cofactor evidence="1">
        <name>[4Fe-4S] cluster</name>
        <dbReference type="ChEBI" id="CHEBI:49883"/>
    </cofactor>
    <text evidence="1">Binds 1 [4Fe-4S] cluster. The cluster is coordinated with 3 cysteines and an exchangeable S-adenosyl-L-methionine.</text>
</comment>
<comment type="subcellular location">
    <subcellularLocation>
        <location evidence="1">Cytoplasm</location>
    </subcellularLocation>
</comment>
<comment type="miscellaneous">
    <text evidence="1">Reaction proceeds by a ping-pong mechanism involving intermediate methylation of a conserved cysteine residue.</text>
</comment>
<comment type="similarity">
    <text evidence="1">Belongs to the radical SAM superfamily. RlmN family.</text>
</comment>
<dbReference type="EC" id="2.1.1.192" evidence="1"/>
<dbReference type="EMBL" id="AE008922">
    <property type="protein sequence ID" value="AAM41271.1"/>
    <property type="molecule type" value="Genomic_DNA"/>
</dbReference>
<dbReference type="RefSeq" id="NP_637347.1">
    <property type="nucleotide sequence ID" value="NC_003902.1"/>
</dbReference>
<dbReference type="SMR" id="Q8P984"/>
<dbReference type="STRING" id="190485.XCC1982"/>
<dbReference type="EnsemblBacteria" id="AAM41271">
    <property type="protein sequence ID" value="AAM41271"/>
    <property type="gene ID" value="XCC1982"/>
</dbReference>
<dbReference type="KEGG" id="xcc:XCC1982"/>
<dbReference type="PATRIC" id="fig|190485.4.peg.2117"/>
<dbReference type="eggNOG" id="COG0820">
    <property type="taxonomic scope" value="Bacteria"/>
</dbReference>
<dbReference type="HOGENOM" id="CLU_029101_0_0_6"/>
<dbReference type="OrthoDB" id="9793973at2"/>
<dbReference type="Proteomes" id="UP000001010">
    <property type="component" value="Chromosome"/>
</dbReference>
<dbReference type="GO" id="GO:0005737">
    <property type="term" value="C:cytoplasm"/>
    <property type="evidence" value="ECO:0007669"/>
    <property type="project" value="UniProtKB-SubCell"/>
</dbReference>
<dbReference type="GO" id="GO:0051539">
    <property type="term" value="F:4 iron, 4 sulfur cluster binding"/>
    <property type="evidence" value="ECO:0007669"/>
    <property type="project" value="UniProtKB-UniRule"/>
</dbReference>
<dbReference type="GO" id="GO:0046872">
    <property type="term" value="F:metal ion binding"/>
    <property type="evidence" value="ECO:0007669"/>
    <property type="project" value="UniProtKB-KW"/>
</dbReference>
<dbReference type="GO" id="GO:0070040">
    <property type="term" value="F:rRNA (adenine(2503)-C2-)-methyltransferase activity"/>
    <property type="evidence" value="ECO:0007669"/>
    <property type="project" value="UniProtKB-UniRule"/>
</dbReference>
<dbReference type="GO" id="GO:0019843">
    <property type="term" value="F:rRNA binding"/>
    <property type="evidence" value="ECO:0007669"/>
    <property type="project" value="UniProtKB-UniRule"/>
</dbReference>
<dbReference type="GO" id="GO:0002935">
    <property type="term" value="F:tRNA (adenine(37)-C2)-methyltransferase activity"/>
    <property type="evidence" value="ECO:0007669"/>
    <property type="project" value="UniProtKB-UniRule"/>
</dbReference>
<dbReference type="GO" id="GO:0000049">
    <property type="term" value="F:tRNA binding"/>
    <property type="evidence" value="ECO:0007669"/>
    <property type="project" value="UniProtKB-UniRule"/>
</dbReference>
<dbReference type="GO" id="GO:0070475">
    <property type="term" value="P:rRNA base methylation"/>
    <property type="evidence" value="ECO:0000318"/>
    <property type="project" value="GO_Central"/>
</dbReference>
<dbReference type="GO" id="GO:0030488">
    <property type="term" value="P:tRNA methylation"/>
    <property type="evidence" value="ECO:0000318"/>
    <property type="project" value="GO_Central"/>
</dbReference>
<dbReference type="CDD" id="cd01335">
    <property type="entry name" value="Radical_SAM"/>
    <property type="match status" value="1"/>
</dbReference>
<dbReference type="FunFam" id="1.10.150.530:FF:000003">
    <property type="entry name" value="Dual-specificity RNA methyltransferase RlmN"/>
    <property type="match status" value="1"/>
</dbReference>
<dbReference type="FunFam" id="3.20.20.70:FF:000008">
    <property type="entry name" value="Dual-specificity RNA methyltransferase RlmN"/>
    <property type="match status" value="1"/>
</dbReference>
<dbReference type="Gene3D" id="1.10.150.530">
    <property type="match status" value="1"/>
</dbReference>
<dbReference type="Gene3D" id="3.20.20.70">
    <property type="entry name" value="Aldolase class I"/>
    <property type="match status" value="1"/>
</dbReference>
<dbReference type="HAMAP" id="MF_01849">
    <property type="entry name" value="RNA_methyltr_RlmN"/>
    <property type="match status" value="1"/>
</dbReference>
<dbReference type="InterPro" id="IPR013785">
    <property type="entry name" value="Aldolase_TIM"/>
</dbReference>
<dbReference type="InterPro" id="IPR040072">
    <property type="entry name" value="Methyltransferase_A"/>
</dbReference>
<dbReference type="InterPro" id="IPR048641">
    <property type="entry name" value="RlmN_N"/>
</dbReference>
<dbReference type="InterPro" id="IPR027492">
    <property type="entry name" value="RNA_MTrfase_RlmN"/>
</dbReference>
<dbReference type="InterPro" id="IPR004383">
    <property type="entry name" value="rRNA_lsu_MTrfase_RlmN/Cfr"/>
</dbReference>
<dbReference type="InterPro" id="IPR007197">
    <property type="entry name" value="rSAM"/>
</dbReference>
<dbReference type="NCBIfam" id="TIGR00048">
    <property type="entry name" value="rRNA_mod_RlmN"/>
    <property type="match status" value="1"/>
</dbReference>
<dbReference type="PANTHER" id="PTHR30544">
    <property type="entry name" value="23S RRNA METHYLTRANSFERASE"/>
    <property type="match status" value="1"/>
</dbReference>
<dbReference type="PANTHER" id="PTHR30544:SF5">
    <property type="entry name" value="RADICAL SAM CORE DOMAIN-CONTAINING PROTEIN"/>
    <property type="match status" value="1"/>
</dbReference>
<dbReference type="Pfam" id="PF04055">
    <property type="entry name" value="Radical_SAM"/>
    <property type="match status" value="1"/>
</dbReference>
<dbReference type="Pfam" id="PF21016">
    <property type="entry name" value="RlmN_N"/>
    <property type="match status" value="1"/>
</dbReference>
<dbReference type="PIRSF" id="PIRSF006004">
    <property type="entry name" value="CHP00048"/>
    <property type="match status" value="1"/>
</dbReference>
<dbReference type="SFLD" id="SFLDF00275">
    <property type="entry name" value="adenosine_C2_methyltransferase"/>
    <property type="match status" value="1"/>
</dbReference>
<dbReference type="SFLD" id="SFLDS00029">
    <property type="entry name" value="Radical_SAM"/>
    <property type="match status" value="1"/>
</dbReference>
<dbReference type="SUPFAM" id="SSF102114">
    <property type="entry name" value="Radical SAM enzymes"/>
    <property type="match status" value="1"/>
</dbReference>
<dbReference type="PROSITE" id="PS51918">
    <property type="entry name" value="RADICAL_SAM"/>
    <property type="match status" value="1"/>
</dbReference>
<protein>
    <recommendedName>
        <fullName evidence="1">Dual-specificity RNA methyltransferase RlmN</fullName>
        <ecNumber evidence="1">2.1.1.192</ecNumber>
    </recommendedName>
    <alternativeName>
        <fullName evidence="1">23S rRNA (adenine(2503)-C(2))-methyltransferase</fullName>
    </alternativeName>
    <alternativeName>
        <fullName evidence="1">23S rRNA m2A2503 methyltransferase</fullName>
    </alternativeName>
    <alternativeName>
        <fullName evidence="1">Ribosomal RNA large subunit methyltransferase N</fullName>
    </alternativeName>
    <alternativeName>
        <fullName evidence="1">tRNA (adenine(37)-C(2))-methyltransferase</fullName>
    </alternativeName>
    <alternativeName>
        <fullName evidence="1">tRNA m2A37 methyltransferase</fullName>
    </alternativeName>
</protein>
<keyword id="KW-0004">4Fe-4S</keyword>
<keyword id="KW-0963">Cytoplasm</keyword>
<keyword id="KW-1015">Disulfide bond</keyword>
<keyword id="KW-0408">Iron</keyword>
<keyword id="KW-0411">Iron-sulfur</keyword>
<keyword id="KW-0479">Metal-binding</keyword>
<keyword id="KW-0489">Methyltransferase</keyword>
<keyword id="KW-1185">Reference proteome</keyword>
<keyword id="KW-0698">rRNA processing</keyword>
<keyword id="KW-0949">S-adenosyl-L-methionine</keyword>
<keyword id="KW-0808">Transferase</keyword>
<keyword id="KW-0819">tRNA processing</keyword>
<organism>
    <name type="scientific">Xanthomonas campestris pv. campestris (strain ATCC 33913 / DSM 3586 / NCPPB 528 / LMG 568 / P 25)</name>
    <dbReference type="NCBI Taxonomy" id="190485"/>
    <lineage>
        <taxon>Bacteria</taxon>
        <taxon>Pseudomonadati</taxon>
        <taxon>Pseudomonadota</taxon>
        <taxon>Gammaproteobacteria</taxon>
        <taxon>Lysobacterales</taxon>
        <taxon>Lysobacteraceae</taxon>
        <taxon>Xanthomonas</taxon>
    </lineage>
</organism>
<reference key="1">
    <citation type="journal article" date="2002" name="Nature">
        <title>Comparison of the genomes of two Xanthomonas pathogens with differing host specificities.</title>
        <authorList>
            <person name="da Silva A.C.R."/>
            <person name="Ferro J.A."/>
            <person name="Reinach F.C."/>
            <person name="Farah C.S."/>
            <person name="Furlan L.R."/>
            <person name="Quaggio R.B."/>
            <person name="Monteiro-Vitorello C.B."/>
            <person name="Van Sluys M.A."/>
            <person name="Almeida N.F. Jr."/>
            <person name="Alves L.M.C."/>
            <person name="do Amaral A.M."/>
            <person name="Bertolini M.C."/>
            <person name="Camargo L.E.A."/>
            <person name="Camarotte G."/>
            <person name="Cannavan F."/>
            <person name="Cardozo J."/>
            <person name="Chambergo F."/>
            <person name="Ciapina L.P."/>
            <person name="Cicarelli R.M.B."/>
            <person name="Coutinho L.L."/>
            <person name="Cursino-Santos J.R."/>
            <person name="El-Dorry H."/>
            <person name="Faria J.B."/>
            <person name="Ferreira A.J.S."/>
            <person name="Ferreira R.C.C."/>
            <person name="Ferro M.I.T."/>
            <person name="Formighieri E.F."/>
            <person name="Franco M.C."/>
            <person name="Greggio C.C."/>
            <person name="Gruber A."/>
            <person name="Katsuyama A.M."/>
            <person name="Kishi L.T."/>
            <person name="Leite R.P."/>
            <person name="Lemos E.G.M."/>
            <person name="Lemos M.V.F."/>
            <person name="Locali E.C."/>
            <person name="Machado M.A."/>
            <person name="Madeira A.M.B.N."/>
            <person name="Martinez-Rossi N.M."/>
            <person name="Martins E.C."/>
            <person name="Meidanis J."/>
            <person name="Menck C.F.M."/>
            <person name="Miyaki C.Y."/>
            <person name="Moon D.H."/>
            <person name="Moreira L.M."/>
            <person name="Novo M.T.M."/>
            <person name="Okura V.K."/>
            <person name="Oliveira M.C."/>
            <person name="Oliveira V.R."/>
            <person name="Pereira H.A."/>
            <person name="Rossi A."/>
            <person name="Sena J.A.D."/>
            <person name="Silva C."/>
            <person name="de Souza R.F."/>
            <person name="Spinola L.A.F."/>
            <person name="Takita M.A."/>
            <person name="Tamura R.E."/>
            <person name="Teixeira E.C."/>
            <person name="Tezza R.I.D."/>
            <person name="Trindade dos Santos M."/>
            <person name="Truffi D."/>
            <person name="Tsai S.M."/>
            <person name="White F.F."/>
            <person name="Setubal J.C."/>
            <person name="Kitajima J.P."/>
        </authorList>
    </citation>
    <scope>NUCLEOTIDE SEQUENCE [LARGE SCALE GENOMIC DNA]</scope>
    <source>
        <strain>ATCC 33913 / DSM 3586 / NCPPB 528 / LMG 568 / P 25</strain>
    </source>
</reference>
<accession>Q8P984</accession>
<evidence type="ECO:0000255" key="1">
    <source>
        <dbReference type="HAMAP-Rule" id="MF_01849"/>
    </source>
</evidence>
<evidence type="ECO:0000255" key="2">
    <source>
        <dbReference type="PROSITE-ProRule" id="PRU01266"/>
    </source>
</evidence>
<name>RLMN_XANCP</name>
<gene>
    <name evidence="1" type="primary">rlmN</name>
    <name type="ordered locus">XCC1982</name>
</gene>
<feature type="chain" id="PRO_0000350526" description="Dual-specificity RNA methyltransferase RlmN">
    <location>
        <begin position="1"/>
        <end position="401"/>
    </location>
</feature>
<feature type="domain" description="Radical SAM core" evidence="2">
    <location>
        <begin position="120"/>
        <end position="365"/>
    </location>
</feature>
<feature type="active site" description="Proton acceptor" evidence="1">
    <location>
        <position position="114"/>
    </location>
</feature>
<feature type="active site" description="S-methylcysteine intermediate" evidence="1">
    <location>
        <position position="370"/>
    </location>
</feature>
<feature type="binding site" evidence="1">
    <location>
        <position position="134"/>
    </location>
    <ligand>
        <name>[4Fe-4S] cluster</name>
        <dbReference type="ChEBI" id="CHEBI:49883"/>
        <note>4Fe-4S-S-AdoMet</note>
    </ligand>
</feature>
<feature type="binding site" evidence="1">
    <location>
        <position position="138"/>
    </location>
    <ligand>
        <name>[4Fe-4S] cluster</name>
        <dbReference type="ChEBI" id="CHEBI:49883"/>
        <note>4Fe-4S-S-AdoMet</note>
    </ligand>
</feature>
<feature type="binding site" evidence="1">
    <location>
        <position position="141"/>
    </location>
    <ligand>
        <name>[4Fe-4S] cluster</name>
        <dbReference type="ChEBI" id="CHEBI:49883"/>
        <note>4Fe-4S-S-AdoMet</note>
    </ligand>
</feature>
<feature type="binding site" evidence="1">
    <location>
        <begin position="187"/>
        <end position="188"/>
    </location>
    <ligand>
        <name>S-adenosyl-L-methionine</name>
        <dbReference type="ChEBI" id="CHEBI:59789"/>
    </ligand>
</feature>
<feature type="binding site" evidence="1">
    <location>
        <position position="219"/>
    </location>
    <ligand>
        <name>S-adenosyl-L-methionine</name>
        <dbReference type="ChEBI" id="CHEBI:59789"/>
    </ligand>
</feature>
<feature type="binding site" evidence="1">
    <location>
        <begin position="241"/>
        <end position="243"/>
    </location>
    <ligand>
        <name>S-adenosyl-L-methionine</name>
        <dbReference type="ChEBI" id="CHEBI:59789"/>
    </ligand>
</feature>
<feature type="binding site" evidence="1">
    <location>
        <position position="327"/>
    </location>
    <ligand>
        <name>S-adenosyl-L-methionine</name>
        <dbReference type="ChEBI" id="CHEBI:59789"/>
    </ligand>
</feature>
<feature type="disulfide bond" description="(transient)" evidence="1">
    <location>
        <begin position="127"/>
        <end position="370"/>
    </location>
</feature>